<protein>
    <recommendedName>
        <fullName>Lambda prophage-derived protein ea10</fullName>
    </recommendedName>
</protein>
<organism>
    <name type="scientific">Escherichia coli O6:H1 (strain CFT073 / ATCC 700928 / UPEC)</name>
    <dbReference type="NCBI Taxonomy" id="199310"/>
    <lineage>
        <taxon>Bacteria</taxon>
        <taxon>Pseudomonadati</taxon>
        <taxon>Pseudomonadota</taxon>
        <taxon>Gammaproteobacteria</taxon>
        <taxon>Enterobacterales</taxon>
        <taxon>Enterobacteriaceae</taxon>
        <taxon>Escherichia</taxon>
    </lineage>
</organism>
<feature type="chain" id="PRO_0000077602" description="Lambda prophage-derived protein ea10">
    <location>
        <begin position="1"/>
        <end position="122"/>
    </location>
</feature>
<name>EA10_ECOL6</name>
<comment type="function">
    <text evidence="1">The ea10 gene protein is believed to be involved in the production of the Tro phenotype. This phenotype is expressed when phages that possess a mutant cro gene and a thermolabile cI repressor gene are unable to propagate at restrictive temperatures. This inability is correlated with the shutoff of host macromolecular synthesis (By similarity).</text>
</comment>
<accession>P68657</accession>
<accession>P03757</accession>
<gene>
    <name type="primary">ea10</name>
    <name type="synonym">ssb</name>
    <name type="ordered locus">c1541</name>
</gene>
<evidence type="ECO:0000250" key="1"/>
<reference key="1">
    <citation type="journal article" date="2002" name="Proc. Natl. Acad. Sci. U.S.A.">
        <title>Extensive mosaic structure revealed by the complete genome sequence of uropathogenic Escherichia coli.</title>
        <authorList>
            <person name="Welch R.A."/>
            <person name="Burland V."/>
            <person name="Plunkett G. III"/>
            <person name="Redford P."/>
            <person name="Roesch P."/>
            <person name="Rasko D."/>
            <person name="Buckles E.L."/>
            <person name="Liou S.-R."/>
            <person name="Boutin A."/>
            <person name="Hackett J."/>
            <person name="Stroud D."/>
            <person name="Mayhew G.F."/>
            <person name="Rose D.J."/>
            <person name="Zhou S."/>
            <person name="Schwartz D.C."/>
            <person name="Perna N.T."/>
            <person name="Mobley H.L.T."/>
            <person name="Donnenberg M.S."/>
            <person name="Blattner F.R."/>
        </authorList>
    </citation>
    <scope>NUCLEOTIDE SEQUENCE [LARGE SCALE GENOMIC DNA]</scope>
    <source>
        <strain>CFT073 / ATCC 700928 / UPEC</strain>
    </source>
</reference>
<proteinExistence type="inferred from homology"/>
<sequence>MSNIKKYIIDYDWKASIEIEIDHDVMTEEKLHQINNFWSDSEYRLNKHGSVLNAVLIMLAQHALLIAISSDLNAYGVVCEFDWNDGNGQEGWPPMDGSEGIRITDIDTSGIFDSDDMTIKAA</sequence>
<dbReference type="EMBL" id="AE014075">
    <property type="protein sequence ID" value="AAN80010.1"/>
    <property type="molecule type" value="Genomic_DNA"/>
</dbReference>
<dbReference type="RefSeq" id="WP_000065374.1">
    <property type="nucleotide sequence ID" value="NZ_CP051263.1"/>
</dbReference>
<dbReference type="STRING" id="199310.c1541"/>
<dbReference type="KEGG" id="ecc:c1541"/>
<dbReference type="eggNOG" id="ENOG50332CT">
    <property type="taxonomic scope" value="Bacteria"/>
</dbReference>
<dbReference type="HOGENOM" id="CLU_163942_0_0_6"/>
<dbReference type="BioCyc" id="ECOL199310:C1541-MONOMER"/>
<dbReference type="Proteomes" id="UP000001410">
    <property type="component" value="Chromosome"/>
</dbReference>
<dbReference type="InterPro" id="IPR024252">
    <property type="entry name" value="DUF2528"/>
</dbReference>
<dbReference type="Pfam" id="PF10800">
    <property type="entry name" value="DUF2528"/>
    <property type="match status" value="1"/>
</dbReference>
<keyword id="KW-1185">Reference proteome</keyword>